<gene>
    <name type="primary">MPG1</name>
    <name type="ordered locus">YALI0C06490g</name>
</gene>
<comment type="function">
    <text evidence="1">Involved in cell wall synthesis where it is required for glycosylation. Involved in cell cycle progression through cell-size checkpoint (By similarity).</text>
</comment>
<comment type="catalytic activity">
    <reaction>
        <text>alpha-D-mannose 1-phosphate + GTP + H(+) = GDP-alpha-D-mannose + diphosphate</text>
        <dbReference type="Rhea" id="RHEA:15229"/>
        <dbReference type="ChEBI" id="CHEBI:15378"/>
        <dbReference type="ChEBI" id="CHEBI:33019"/>
        <dbReference type="ChEBI" id="CHEBI:37565"/>
        <dbReference type="ChEBI" id="CHEBI:57527"/>
        <dbReference type="ChEBI" id="CHEBI:58409"/>
        <dbReference type="EC" id="2.7.7.13"/>
    </reaction>
</comment>
<comment type="pathway">
    <text>Nucleotide-sugar biosynthesis; GDP-alpha-D-mannose biosynthesis; GDP-alpha-D-mannose from alpha-D-mannose 1-phosphate (GTP route): step 1/1.</text>
</comment>
<comment type="subcellular location">
    <subcellularLocation>
        <location evidence="1">Cytoplasm</location>
    </subcellularLocation>
</comment>
<comment type="similarity">
    <text evidence="2">Belongs to the transferase hexapeptide repeat family.</text>
</comment>
<sequence>MKGLILVGGYGTRLRPLTLTLPKPLVEFGNKPMILHQVESLAAAGVKDIVLAVNYRPEVMIETLKKYEEKYGVNITFSVETEPLGTAGPLKLAEEILCKDDTPFFVLNSDVICDYPFAELAEFHKKNNAEATIVATKVEEPSKYGVIVHKQGTSKIDRFVEKPVEFVGNRINAGIYILNPSVVDLIDLRPTSIEKETFPQLAARESLYSFDLEGYWMDVGQPKDFLSGTCLYLSSLSKKNPEALVPTSEPYVTGGNVLVDPTAKISPQAKIGPNVVIGPGAVIGEGARLSRCVVLANSTIKPHAFVKNSIIGWNGRVGRWARIENVSVFGDDVEVKDEVYVNGGRVLPHKTISGNIEKPEIIM</sequence>
<keyword id="KW-0131">Cell cycle</keyword>
<keyword id="KW-0963">Cytoplasm</keyword>
<keyword id="KW-0342">GTP-binding</keyword>
<keyword id="KW-0547">Nucleotide-binding</keyword>
<keyword id="KW-0548">Nucleotidyltransferase</keyword>
<keyword id="KW-1185">Reference proteome</keyword>
<keyword id="KW-0808">Transferase</keyword>
<protein>
    <recommendedName>
        <fullName>Mannose-1-phosphate guanyltransferase</fullName>
        <ecNumber>2.7.7.13</ecNumber>
    </recommendedName>
    <alternativeName>
        <fullName>GDP-mannose pyrophosphorylase</fullName>
    </alternativeName>
    <alternativeName>
        <fullName>GTP-mannose-1-phosphate guanylyltransferase</fullName>
    </alternativeName>
</protein>
<organism>
    <name type="scientific">Yarrowia lipolytica (strain CLIB 122 / E 150)</name>
    <name type="common">Yeast</name>
    <name type="synonym">Candida lipolytica</name>
    <dbReference type="NCBI Taxonomy" id="284591"/>
    <lineage>
        <taxon>Eukaryota</taxon>
        <taxon>Fungi</taxon>
        <taxon>Dikarya</taxon>
        <taxon>Ascomycota</taxon>
        <taxon>Saccharomycotina</taxon>
        <taxon>Dipodascomycetes</taxon>
        <taxon>Dipodascales</taxon>
        <taxon>Dipodascales incertae sedis</taxon>
        <taxon>Yarrowia</taxon>
    </lineage>
</organism>
<evidence type="ECO:0000250" key="1"/>
<evidence type="ECO:0000305" key="2"/>
<name>MPG1_YARLI</name>
<proteinExistence type="inferred from homology"/>
<dbReference type="EC" id="2.7.7.13"/>
<dbReference type="EMBL" id="CR382129">
    <property type="protein sequence ID" value="CAG81822.1"/>
    <property type="molecule type" value="Genomic_DNA"/>
</dbReference>
<dbReference type="RefSeq" id="XP_501519.1">
    <property type="nucleotide sequence ID" value="XM_501519.1"/>
</dbReference>
<dbReference type="SMR" id="Q6CCU3"/>
<dbReference type="FunCoup" id="Q6CCU3">
    <property type="interactions" value="1414"/>
</dbReference>
<dbReference type="STRING" id="284591.Q6CCU3"/>
<dbReference type="EnsemblFungi" id="CAG81822">
    <property type="protein sequence ID" value="CAG81822"/>
    <property type="gene ID" value="YALI0_C06490g"/>
</dbReference>
<dbReference type="KEGG" id="yli:2909316"/>
<dbReference type="VEuPathDB" id="FungiDB:YALI0_C06490g"/>
<dbReference type="HOGENOM" id="CLU_029499_0_0_1"/>
<dbReference type="InParanoid" id="Q6CCU3"/>
<dbReference type="OMA" id="GPNCWIC"/>
<dbReference type="OrthoDB" id="105644at4891"/>
<dbReference type="UniPathway" id="UPA00126">
    <property type="reaction ID" value="UER00930"/>
</dbReference>
<dbReference type="Proteomes" id="UP000001300">
    <property type="component" value="Chromosome C"/>
</dbReference>
<dbReference type="GO" id="GO:0005737">
    <property type="term" value="C:cytoplasm"/>
    <property type="evidence" value="ECO:0000318"/>
    <property type="project" value="GO_Central"/>
</dbReference>
<dbReference type="GO" id="GO:0005525">
    <property type="term" value="F:GTP binding"/>
    <property type="evidence" value="ECO:0007669"/>
    <property type="project" value="UniProtKB-KW"/>
</dbReference>
<dbReference type="GO" id="GO:0004475">
    <property type="term" value="F:mannose-1-phosphate guanylyltransferase (GTP) activity"/>
    <property type="evidence" value="ECO:0000318"/>
    <property type="project" value="GO_Central"/>
</dbReference>
<dbReference type="GO" id="GO:0009298">
    <property type="term" value="P:GDP-mannose biosynthetic process"/>
    <property type="evidence" value="ECO:0000318"/>
    <property type="project" value="GO_Central"/>
</dbReference>
<dbReference type="GO" id="GO:0006486">
    <property type="term" value="P:protein glycosylation"/>
    <property type="evidence" value="ECO:0000318"/>
    <property type="project" value="GO_Central"/>
</dbReference>
<dbReference type="CDD" id="cd06425">
    <property type="entry name" value="M1P_guanylylT_B_like_N"/>
    <property type="match status" value="1"/>
</dbReference>
<dbReference type="FunFam" id="3.90.550.10:FF:000013">
    <property type="entry name" value="mannose-1-phosphate guanyltransferase beta"/>
    <property type="match status" value="1"/>
</dbReference>
<dbReference type="Gene3D" id="2.160.10.10">
    <property type="entry name" value="Hexapeptide repeat proteins"/>
    <property type="match status" value="1"/>
</dbReference>
<dbReference type="Gene3D" id="3.90.550.10">
    <property type="entry name" value="Spore Coat Polysaccharide Biosynthesis Protein SpsA, Chain A"/>
    <property type="match status" value="1"/>
</dbReference>
<dbReference type="InterPro" id="IPR056729">
    <property type="entry name" value="GMPPB_C"/>
</dbReference>
<dbReference type="InterPro" id="IPR045233">
    <property type="entry name" value="GMPPB_N"/>
</dbReference>
<dbReference type="InterPro" id="IPR050486">
    <property type="entry name" value="Mannose-1P_guanyltransferase"/>
</dbReference>
<dbReference type="InterPro" id="IPR005835">
    <property type="entry name" value="NTP_transferase_dom"/>
</dbReference>
<dbReference type="InterPro" id="IPR029044">
    <property type="entry name" value="Nucleotide-diphossugar_trans"/>
</dbReference>
<dbReference type="PANTHER" id="PTHR22572">
    <property type="entry name" value="SUGAR-1-PHOSPHATE GUANYL TRANSFERASE"/>
    <property type="match status" value="1"/>
</dbReference>
<dbReference type="Pfam" id="PF25087">
    <property type="entry name" value="GMPPB_C"/>
    <property type="match status" value="1"/>
</dbReference>
<dbReference type="Pfam" id="PF00483">
    <property type="entry name" value="NTP_transferase"/>
    <property type="match status" value="1"/>
</dbReference>
<dbReference type="SUPFAM" id="SSF53448">
    <property type="entry name" value="Nucleotide-diphospho-sugar transferases"/>
    <property type="match status" value="1"/>
</dbReference>
<reference key="1">
    <citation type="journal article" date="2004" name="Nature">
        <title>Genome evolution in yeasts.</title>
        <authorList>
            <person name="Dujon B."/>
            <person name="Sherman D."/>
            <person name="Fischer G."/>
            <person name="Durrens P."/>
            <person name="Casaregola S."/>
            <person name="Lafontaine I."/>
            <person name="de Montigny J."/>
            <person name="Marck C."/>
            <person name="Neuveglise C."/>
            <person name="Talla E."/>
            <person name="Goffard N."/>
            <person name="Frangeul L."/>
            <person name="Aigle M."/>
            <person name="Anthouard V."/>
            <person name="Babour A."/>
            <person name="Barbe V."/>
            <person name="Barnay S."/>
            <person name="Blanchin S."/>
            <person name="Beckerich J.-M."/>
            <person name="Beyne E."/>
            <person name="Bleykasten C."/>
            <person name="Boisrame A."/>
            <person name="Boyer J."/>
            <person name="Cattolico L."/>
            <person name="Confanioleri F."/>
            <person name="de Daruvar A."/>
            <person name="Despons L."/>
            <person name="Fabre E."/>
            <person name="Fairhead C."/>
            <person name="Ferry-Dumazet H."/>
            <person name="Groppi A."/>
            <person name="Hantraye F."/>
            <person name="Hennequin C."/>
            <person name="Jauniaux N."/>
            <person name="Joyet P."/>
            <person name="Kachouri R."/>
            <person name="Kerrest A."/>
            <person name="Koszul R."/>
            <person name="Lemaire M."/>
            <person name="Lesur I."/>
            <person name="Ma L."/>
            <person name="Muller H."/>
            <person name="Nicaud J.-M."/>
            <person name="Nikolski M."/>
            <person name="Oztas S."/>
            <person name="Ozier-Kalogeropoulos O."/>
            <person name="Pellenz S."/>
            <person name="Potier S."/>
            <person name="Richard G.-F."/>
            <person name="Straub M.-L."/>
            <person name="Suleau A."/>
            <person name="Swennen D."/>
            <person name="Tekaia F."/>
            <person name="Wesolowski-Louvel M."/>
            <person name="Westhof E."/>
            <person name="Wirth B."/>
            <person name="Zeniou-Meyer M."/>
            <person name="Zivanovic Y."/>
            <person name="Bolotin-Fukuhara M."/>
            <person name="Thierry A."/>
            <person name="Bouchier C."/>
            <person name="Caudron B."/>
            <person name="Scarpelli C."/>
            <person name="Gaillardin C."/>
            <person name="Weissenbach J."/>
            <person name="Wincker P."/>
            <person name="Souciet J.-L."/>
        </authorList>
    </citation>
    <scope>NUCLEOTIDE SEQUENCE [LARGE SCALE GENOMIC DNA]</scope>
    <source>
        <strain>CLIB 122 / E 150</strain>
    </source>
</reference>
<feature type="chain" id="PRO_0000238494" description="Mannose-1-phosphate guanyltransferase">
    <location>
        <begin position="1"/>
        <end position="363"/>
    </location>
</feature>
<accession>Q6CCU3</accession>